<gene>
    <name evidence="2" type="primary">yejK</name>
    <name type="ordered locus">STY2463</name>
    <name type="ordered locus">t0628</name>
</gene>
<proteinExistence type="inferred from homology"/>
<evidence type="ECO:0000250" key="1"/>
<evidence type="ECO:0000255" key="2">
    <source>
        <dbReference type="HAMAP-Rule" id="MF_00730"/>
    </source>
</evidence>
<feature type="initiator methionine" description="Removed" evidence="1">
    <location>
        <position position="1"/>
    </location>
</feature>
<feature type="chain" id="PRO_0000210918" description="Nucleoid-associated protein YejK">
    <location>
        <begin position="2"/>
        <end position="335"/>
    </location>
</feature>
<comment type="subcellular location">
    <subcellularLocation>
        <location evidence="2">Cytoplasm</location>
        <location evidence="2">Nucleoid</location>
    </subcellularLocation>
</comment>
<comment type="similarity">
    <text evidence="2">Belongs to the YejK family.</text>
</comment>
<name>NDPA_SALTI</name>
<accession>P67715</accession>
<accession>Q8XG52</accession>
<protein>
    <recommendedName>
        <fullName evidence="2">Nucleoid-associated protein YejK</fullName>
    </recommendedName>
</protein>
<keyword id="KW-0963">Cytoplasm</keyword>
<organism>
    <name type="scientific">Salmonella typhi</name>
    <dbReference type="NCBI Taxonomy" id="90370"/>
    <lineage>
        <taxon>Bacteria</taxon>
        <taxon>Pseudomonadati</taxon>
        <taxon>Pseudomonadota</taxon>
        <taxon>Gammaproteobacteria</taxon>
        <taxon>Enterobacterales</taxon>
        <taxon>Enterobacteriaceae</taxon>
        <taxon>Salmonella</taxon>
    </lineage>
</organism>
<reference key="1">
    <citation type="journal article" date="2001" name="Nature">
        <title>Complete genome sequence of a multiple drug resistant Salmonella enterica serovar Typhi CT18.</title>
        <authorList>
            <person name="Parkhill J."/>
            <person name="Dougan G."/>
            <person name="James K.D."/>
            <person name="Thomson N.R."/>
            <person name="Pickard D."/>
            <person name="Wain J."/>
            <person name="Churcher C.M."/>
            <person name="Mungall K.L."/>
            <person name="Bentley S.D."/>
            <person name="Holden M.T.G."/>
            <person name="Sebaihia M."/>
            <person name="Baker S."/>
            <person name="Basham D."/>
            <person name="Brooks K."/>
            <person name="Chillingworth T."/>
            <person name="Connerton P."/>
            <person name="Cronin A."/>
            <person name="Davis P."/>
            <person name="Davies R.M."/>
            <person name="Dowd L."/>
            <person name="White N."/>
            <person name="Farrar J."/>
            <person name="Feltwell T."/>
            <person name="Hamlin N."/>
            <person name="Haque A."/>
            <person name="Hien T.T."/>
            <person name="Holroyd S."/>
            <person name="Jagels K."/>
            <person name="Krogh A."/>
            <person name="Larsen T.S."/>
            <person name="Leather S."/>
            <person name="Moule S."/>
            <person name="O'Gaora P."/>
            <person name="Parry C."/>
            <person name="Quail M.A."/>
            <person name="Rutherford K.M."/>
            <person name="Simmonds M."/>
            <person name="Skelton J."/>
            <person name="Stevens K."/>
            <person name="Whitehead S."/>
            <person name="Barrell B.G."/>
        </authorList>
    </citation>
    <scope>NUCLEOTIDE SEQUENCE [LARGE SCALE GENOMIC DNA]</scope>
    <source>
        <strain>CT18</strain>
    </source>
</reference>
<reference key="2">
    <citation type="journal article" date="2003" name="J. Bacteriol.">
        <title>Comparative genomics of Salmonella enterica serovar Typhi strains Ty2 and CT18.</title>
        <authorList>
            <person name="Deng W."/>
            <person name="Liou S.-R."/>
            <person name="Plunkett G. III"/>
            <person name="Mayhew G.F."/>
            <person name="Rose D.J."/>
            <person name="Burland V."/>
            <person name="Kodoyianni V."/>
            <person name="Schwartz D.C."/>
            <person name="Blattner F.R."/>
        </authorList>
    </citation>
    <scope>NUCLEOTIDE SEQUENCE [LARGE SCALE GENOMIC DNA]</scope>
    <source>
        <strain>ATCC 700931 / Ty2</strain>
    </source>
</reference>
<sequence length="335" mass="37877">MSLDINQIALHQLIKRDEQNLELVLRDSLLEPTTTVVEMVAELHRVYSAKNKAYGLFNEESELAQALRLQRQGEEDFLAFSRAATGRLRDELAKYPFADGGIVLFCHYRYLAVEYLLVTVLNNLSSMRVNENLDINPTHYLDINHADIVARIDLTEWETNPQSTRYLTFLKGRVGRKVADFFMDFLGASEGLNAKAQNRGLLQAVDDFTAEAQLDKAERQNVRQQVYSYCNEQLQAGEEIELESLSKELSGVSEVSFSEFTAEKGYELEESFPADRSTLRQLTKYAGSGGGLTINFDAMLLGERIFWDPATDTLTIKGTPPNLRDQLQRRTSGGK</sequence>
<dbReference type="EMBL" id="AL513382">
    <property type="protein sequence ID" value="CAD02609.1"/>
    <property type="molecule type" value="Genomic_DNA"/>
</dbReference>
<dbReference type="EMBL" id="AE014613">
    <property type="protein sequence ID" value="AAO68329.1"/>
    <property type="molecule type" value="Genomic_DNA"/>
</dbReference>
<dbReference type="RefSeq" id="NP_456784.1">
    <property type="nucleotide sequence ID" value="NC_003198.1"/>
</dbReference>
<dbReference type="RefSeq" id="WP_000050806.1">
    <property type="nucleotide sequence ID" value="NZ_WSUR01000002.1"/>
</dbReference>
<dbReference type="SMR" id="P67715"/>
<dbReference type="STRING" id="220341.gene:17586364"/>
<dbReference type="KEGG" id="stt:t0628"/>
<dbReference type="KEGG" id="sty:STY2463"/>
<dbReference type="PATRIC" id="fig|220341.7.peg.2491"/>
<dbReference type="eggNOG" id="COG3081">
    <property type="taxonomic scope" value="Bacteria"/>
</dbReference>
<dbReference type="HOGENOM" id="CLU_063050_0_1_6"/>
<dbReference type="OMA" id="FFMDFLA"/>
<dbReference type="OrthoDB" id="9131762at2"/>
<dbReference type="Proteomes" id="UP000000541">
    <property type="component" value="Chromosome"/>
</dbReference>
<dbReference type="Proteomes" id="UP000002670">
    <property type="component" value="Chromosome"/>
</dbReference>
<dbReference type="GO" id="GO:0043590">
    <property type="term" value="C:bacterial nucleoid"/>
    <property type="evidence" value="ECO:0007669"/>
    <property type="project" value="TreeGrafter"/>
</dbReference>
<dbReference type="GO" id="GO:0005737">
    <property type="term" value="C:cytoplasm"/>
    <property type="evidence" value="ECO:0007669"/>
    <property type="project" value="UniProtKB-UniRule"/>
</dbReference>
<dbReference type="GO" id="GO:0003690">
    <property type="term" value="F:double-stranded DNA binding"/>
    <property type="evidence" value="ECO:0007669"/>
    <property type="project" value="TreeGrafter"/>
</dbReference>
<dbReference type="GO" id="GO:0003727">
    <property type="term" value="F:single-stranded RNA binding"/>
    <property type="evidence" value="ECO:0007669"/>
    <property type="project" value="TreeGrafter"/>
</dbReference>
<dbReference type="HAMAP" id="MF_00730">
    <property type="entry name" value="NdpA"/>
    <property type="match status" value="1"/>
</dbReference>
<dbReference type="InterPro" id="IPR007358">
    <property type="entry name" value="Nucleoid_associated_NdpA"/>
</dbReference>
<dbReference type="NCBIfam" id="NF001557">
    <property type="entry name" value="PRK00378.1"/>
    <property type="match status" value="1"/>
</dbReference>
<dbReference type="PANTHER" id="PTHR38772">
    <property type="match status" value="1"/>
</dbReference>
<dbReference type="PANTHER" id="PTHR38772:SF1">
    <property type="entry name" value="NUCLEOID-ASSOCIATED PROTEIN YEJK"/>
    <property type="match status" value="1"/>
</dbReference>
<dbReference type="Pfam" id="PF04245">
    <property type="entry name" value="NA37"/>
    <property type="match status" value="1"/>
</dbReference>